<feature type="chain" id="PRO_0000206008" description="Mating-type-like protein ALPHA1">
    <location>
        <begin position="1"/>
        <end position="191"/>
    </location>
</feature>
<feature type="DNA-binding region" description="Alpha box" evidence="2">
    <location>
        <begin position="118"/>
        <end position="174"/>
    </location>
</feature>
<feature type="sequence variant" description="In strain: 7549." evidence="3">
    <original>A</original>
    <variation>S</variation>
    <location>
        <position position="152"/>
    </location>
</feature>
<accession>Q874P0</accession>
<accession>Q6FX74</accession>
<accession>Q6FXB5</accession>
<accession>Q86Z70</accession>
<accession>Q870I5</accession>
<comment type="function">
    <text evidence="1">Mating type proteins are sequence specific DNA-binding proteins that act as master switches in yeast differentiation by controlling gene expression in a cell type-specific fashion. Transcriptional activator that induces the transcription of alpha-specific genes (By similarity).</text>
</comment>
<comment type="subcellular location">
    <subcellularLocation>
        <location evidence="2">Nucleus</location>
    </subcellularLocation>
</comment>
<comment type="developmental stage">
    <text evidence="4">Only present in alpha-cells (classes II and III).</text>
</comment>
<comment type="miscellaneous">
    <text>There are three genetic loci for mating type genes in C.glabrata. MTL1 seems to be the expression locus that determines the mating type of the cell, whereas MTL2 (containing MTL2A1) and MTL3 (containing MTL3ALPHA1 and MTL3ALPHA2) appear to represent silenced repositories of mating type information.</text>
</comment>
<comment type="miscellaneous">
    <text>Haploid C.glabrata strains can switch mating type, however, neither mating nor diploid forms of C.glabrata have been observed so far.</text>
</comment>
<comment type="similarity">
    <text evidence="2">Belongs to the MATALPHA1 family.</text>
</comment>
<comment type="caution">
    <text evidence="5">It is uncertain whether Met-1 or Met-8 is the initiator.</text>
</comment>
<comment type="sequence caution" evidence="5">
    <conflict type="erroneous initiation">
        <sequence resource="EMBL-CDS" id="AAP06781"/>
    </conflict>
</comment>
<comment type="sequence caution" evidence="5">
    <conflict type="erroneous initiation">
        <sequence resource="EMBL-CDS" id="AAP06783"/>
    </conflict>
</comment>
<comment type="sequence caution" evidence="5">
    <conflict type="erroneous initiation">
        <sequence resource="EMBL-CDS" id="AAP06785"/>
    </conflict>
</comment>
<comment type="sequence caution" evidence="5">
    <conflict type="erroneous initiation">
        <sequence resource="EMBL-CDS" id="CAG57879"/>
    </conflict>
</comment>
<comment type="sequence caution" evidence="5">
    <conflict type="erroneous initiation">
        <sequence resource="EMBL-CDS" id="CAG57924"/>
    </conflict>
</comment>
<proteinExistence type="evidence at transcript level"/>
<reference key="1">
    <citation type="journal article" date="2003" name="Genome Biol.">
        <title>Evidence from comparative genomics for a complete sexual cycle in the 'asexual' pathogenic yeast Candida glabrata.</title>
        <authorList>
            <person name="Wong S."/>
            <person name="Fares M.A."/>
            <person name="Zimmermann W."/>
            <person name="Butler G."/>
            <person name="Wolfe K.H."/>
        </authorList>
    </citation>
    <scope>NUCLEOTIDE SEQUENCE [GENOMIC DNA]</scope>
    <source>
        <strain>ATCC 2001 / BCRC 20586 / JCM 3761 / NBRC 0622 / NRRL Y-65 / CBS 138</strain>
    </source>
</reference>
<reference key="2">
    <citation type="journal article" date="2003" name="Eukaryot. Cell">
        <title>Three mating type-like loci in Candida glabrata.</title>
        <authorList>
            <person name="Srikantha T."/>
            <person name="Lachke S.A."/>
            <person name="Soll D.R."/>
        </authorList>
    </citation>
    <scope>NUCLEOTIDE SEQUENCE [GENOMIC DNA]</scope>
    <scope>VARIANT SER-152</scope>
    <source>
        <strain>1480.47</strain>
        <strain>7549</strain>
        <strain>PB921</strain>
    </source>
</reference>
<reference key="3">
    <citation type="journal article" date="2004" name="Nature">
        <title>Genome evolution in yeasts.</title>
        <authorList>
            <person name="Dujon B."/>
            <person name="Sherman D."/>
            <person name="Fischer G."/>
            <person name="Durrens P."/>
            <person name="Casaregola S."/>
            <person name="Lafontaine I."/>
            <person name="de Montigny J."/>
            <person name="Marck C."/>
            <person name="Neuveglise C."/>
            <person name="Talla E."/>
            <person name="Goffard N."/>
            <person name="Frangeul L."/>
            <person name="Aigle M."/>
            <person name="Anthouard V."/>
            <person name="Babour A."/>
            <person name="Barbe V."/>
            <person name="Barnay S."/>
            <person name="Blanchin S."/>
            <person name="Beckerich J.-M."/>
            <person name="Beyne E."/>
            <person name="Bleykasten C."/>
            <person name="Boisrame A."/>
            <person name="Boyer J."/>
            <person name="Cattolico L."/>
            <person name="Confanioleri F."/>
            <person name="de Daruvar A."/>
            <person name="Despons L."/>
            <person name="Fabre E."/>
            <person name="Fairhead C."/>
            <person name="Ferry-Dumazet H."/>
            <person name="Groppi A."/>
            <person name="Hantraye F."/>
            <person name="Hennequin C."/>
            <person name="Jauniaux N."/>
            <person name="Joyet P."/>
            <person name="Kachouri R."/>
            <person name="Kerrest A."/>
            <person name="Koszul R."/>
            <person name="Lemaire M."/>
            <person name="Lesur I."/>
            <person name="Ma L."/>
            <person name="Muller H."/>
            <person name="Nicaud J.-M."/>
            <person name="Nikolski M."/>
            <person name="Oztas S."/>
            <person name="Ozier-Kalogeropoulos O."/>
            <person name="Pellenz S."/>
            <person name="Potier S."/>
            <person name="Richard G.-F."/>
            <person name="Straub M.-L."/>
            <person name="Suleau A."/>
            <person name="Swennen D."/>
            <person name="Tekaia F."/>
            <person name="Wesolowski-Louvel M."/>
            <person name="Westhof E."/>
            <person name="Wirth B."/>
            <person name="Zeniou-Meyer M."/>
            <person name="Zivanovic Y."/>
            <person name="Bolotin-Fukuhara M."/>
            <person name="Thierry A."/>
            <person name="Bouchier C."/>
            <person name="Caudron B."/>
            <person name="Scarpelli C."/>
            <person name="Gaillardin C."/>
            <person name="Weissenbach J."/>
            <person name="Wincker P."/>
            <person name="Souciet J.-L."/>
        </authorList>
    </citation>
    <scope>NUCLEOTIDE SEQUENCE [LARGE SCALE GENOMIC DNA]</scope>
    <source>
        <strain>ATCC 2001 / BCRC 20586 / JCM 3761 / NBRC 0622 / NRRL Y-65 / CBS 138</strain>
    </source>
</reference>
<reference key="4">
    <citation type="journal article" date="2003" name="Infect. Immun.">
        <title>Phenotypic switching and mating type switching of Candida glabrata at sites of colonization.</title>
        <authorList>
            <person name="Brockert P.J."/>
            <person name="Lachke S.A."/>
            <person name="Srikantha T."/>
            <person name="Pujol C."/>
            <person name="Galask R."/>
            <person name="Soll D.R."/>
        </authorList>
    </citation>
    <scope>DEVELOPMENTAL STAGE</scope>
</reference>
<sequence length="191" mass="21894">MLTETLTMKYTATKFRVRTNKRLRSQKYPEKHSDFLGCSSTKSSFGLNMLLTKPNKFQIPPPHPVLLKRIREERMKLTSSFESGINIIDIETSWEIDKFISHHFNTSIGNVLKSKSSSKKRPMNAFMAFRTYYAQLGTGLKQNTLSVILSEAWNAPETDQNIWDIFAQQFNFASPRCGFVNYIMAHASSAP</sequence>
<keyword id="KW-0010">Activator</keyword>
<keyword id="KW-0238">DNA-binding</keyword>
<keyword id="KW-0539">Nucleus</keyword>
<keyword id="KW-1185">Reference proteome</keyword>
<keyword id="KW-0804">Transcription</keyword>
<keyword id="KW-0805">Transcription regulation</keyword>
<protein>
    <recommendedName>
        <fullName>Mating-type-like protein ALPHA1</fullName>
    </recommendedName>
</protein>
<dbReference type="EMBL" id="AY181247">
    <property type="protein sequence ID" value="AAO25591.1"/>
    <property type="molecule type" value="Genomic_DNA"/>
</dbReference>
<dbReference type="EMBL" id="AY191463">
    <property type="protein sequence ID" value="AAP06781.1"/>
    <property type="status" value="ALT_INIT"/>
    <property type="molecule type" value="Genomic_DNA"/>
</dbReference>
<dbReference type="EMBL" id="AY191464">
    <property type="protein sequence ID" value="AAP06783.1"/>
    <property type="status" value="ALT_INIT"/>
    <property type="molecule type" value="Genomic_DNA"/>
</dbReference>
<dbReference type="EMBL" id="AY207368">
    <property type="protein sequence ID" value="AAP06785.1"/>
    <property type="status" value="ALT_INIT"/>
    <property type="molecule type" value="Genomic_DNA"/>
</dbReference>
<dbReference type="EMBL" id="CR380948">
    <property type="protein sequence ID" value="CAG57879.2"/>
    <property type="status" value="ALT_INIT"/>
    <property type="molecule type" value="Genomic_DNA"/>
</dbReference>
<dbReference type="EMBL" id="CR380948">
    <property type="protein sequence ID" value="CAG57924.2"/>
    <property type="status" value="ALT_INIT"/>
    <property type="molecule type" value="Genomic_DNA"/>
</dbReference>
<dbReference type="RefSeq" id="XP_444980.2">
    <property type="nucleotide sequence ID" value="XM_444980.2"/>
</dbReference>
<dbReference type="STRING" id="284593.Q874P0"/>
<dbReference type="KEGG" id="cgr:2886617"/>
<dbReference type="KEGG" id="cgr:2886684"/>
<dbReference type="eggNOG" id="ENOG502S4ZK">
    <property type="taxonomic scope" value="Eukaryota"/>
</dbReference>
<dbReference type="HOGENOM" id="CLU_118234_1_0_1"/>
<dbReference type="InParanoid" id="Q874P0"/>
<dbReference type="Proteomes" id="UP000002428">
    <property type="component" value="Chromosome B"/>
</dbReference>
<dbReference type="GO" id="GO:0005634">
    <property type="term" value="C:nucleus"/>
    <property type="evidence" value="ECO:0007669"/>
    <property type="project" value="UniProtKB-SubCell"/>
</dbReference>
<dbReference type="GO" id="GO:0008301">
    <property type="term" value="F:DNA binding, bending"/>
    <property type="evidence" value="ECO:0007669"/>
    <property type="project" value="InterPro"/>
</dbReference>
<dbReference type="GO" id="GO:0043565">
    <property type="term" value="F:sequence-specific DNA binding"/>
    <property type="evidence" value="ECO:0007669"/>
    <property type="project" value="InterPro"/>
</dbReference>
<dbReference type="GO" id="GO:0045895">
    <property type="term" value="P:positive regulation of mating-type specific transcription, DNA-templated"/>
    <property type="evidence" value="ECO:0007669"/>
    <property type="project" value="InterPro"/>
</dbReference>
<dbReference type="InterPro" id="IPR016325">
    <property type="entry name" value="ALPHA1_Saccharomycetales"/>
</dbReference>
<dbReference type="InterPro" id="IPR036910">
    <property type="entry name" value="HMG_box_dom_sf"/>
</dbReference>
<dbReference type="InterPro" id="IPR006856">
    <property type="entry name" value="MATalpha_HMGbox"/>
</dbReference>
<dbReference type="Pfam" id="PF04769">
    <property type="entry name" value="MATalpha_HMGbox"/>
    <property type="match status" value="1"/>
</dbReference>
<dbReference type="PIRSF" id="PIRSF001863">
    <property type="entry name" value="Transcrpt_activ_MAT_Alpha1"/>
    <property type="match status" value="1"/>
</dbReference>
<dbReference type="SUPFAM" id="SSF47095">
    <property type="entry name" value="HMG-box"/>
    <property type="match status" value="1"/>
</dbReference>
<dbReference type="PROSITE" id="PS51325">
    <property type="entry name" value="ALPHA_BOX"/>
    <property type="match status" value="1"/>
</dbReference>
<evidence type="ECO:0000250" key="1"/>
<evidence type="ECO:0000255" key="2">
    <source>
        <dbReference type="PROSITE-ProRule" id="PRU00655"/>
    </source>
</evidence>
<evidence type="ECO:0000269" key="3">
    <source>
    </source>
</evidence>
<evidence type="ECO:0000269" key="4">
    <source>
    </source>
</evidence>
<evidence type="ECO:0000305" key="5"/>
<gene>
    <name type="primary">MTL1ALPHA1</name>
    <name type="synonym">ALPHA1</name>
    <name type="ordered locus">CAGL0B01243g</name>
</gene>
<gene>
    <name type="primary">MTL3ALPHA1</name>
    <name type="ordered locus">CAGL0B00242g</name>
</gene>
<organism>
    <name type="scientific">Candida glabrata (strain ATCC 2001 / BCRC 20586 / JCM 3761 / NBRC 0622 / NRRL Y-65 / CBS 138)</name>
    <name type="common">Yeast</name>
    <name type="synonym">Nakaseomyces glabratus</name>
    <dbReference type="NCBI Taxonomy" id="284593"/>
    <lineage>
        <taxon>Eukaryota</taxon>
        <taxon>Fungi</taxon>
        <taxon>Dikarya</taxon>
        <taxon>Ascomycota</taxon>
        <taxon>Saccharomycotina</taxon>
        <taxon>Saccharomycetes</taxon>
        <taxon>Saccharomycetales</taxon>
        <taxon>Saccharomycetaceae</taxon>
        <taxon>Nakaseomyces</taxon>
    </lineage>
</organism>
<name>MTAL1_CANGA</name>